<comment type="function">
    <text evidence="1">The UvrABC repair system catalyzes the recognition and processing of DNA lesions. A damage recognition complex composed of 2 UvrA and 2 UvrB subunits scans DNA for abnormalities. Upon binding of the UvrA(2)B(2) complex to a putative damaged site, the DNA wraps around one UvrB monomer. DNA wrap is dependent on ATP binding by UvrB and probably causes local melting of the DNA helix, facilitating insertion of UvrB beta-hairpin between the DNA strands. Then UvrB probes one DNA strand for the presence of a lesion. If a lesion is found the UvrA subunits dissociate and the UvrB-DNA preincision complex is formed. This complex is subsequently bound by UvrC and the second UvrB is released. If no lesion is found, the DNA wraps around the other UvrB subunit that will check the other stand for damage.</text>
</comment>
<comment type="subunit">
    <text evidence="1">Forms a heterotetramer with UvrA during the search for lesions. Interacts with UvrC in an incision complex.</text>
</comment>
<comment type="subcellular location">
    <subcellularLocation>
        <location evidence="1">Cytoplasm</location>
    </subcellularLocation>
</comment>
<comment type="domain">
    <text evidence="1">The beta-hairpin motif is involved in DNA binding.</text>
</comment>
<comment type="similarity">
    <text evidence="1">Belongs to the UvrB family.</text>
</comment>
<protein>
    <recommendedName>
        <fullName evidence="1">UvrABC system protein B</fullName>
        <shortName evidence="1">Protein UvrB</shortName>
    </recommendedName>
    <alternativeName>
        <fullName evidence="1">Excinuclease ABC subunit B</fullName>
    </alternativeName>
</protein>
<keyword id="KW-0067">ATP-binding</keyword>
<keyword id="KW-0963">Cytoplasm</keyword>
<keyword id="KW-0227">DNA damage</keyword>
<keyword id="KW-0228">DNA excision</keyword>
<keyword id="KW-0234">DNA repair</keyword>
<keyword id="KW-0267">Excision nuclease</keyword>
<keyword id="KW-0347">Helicase</keyword>
<keyword id="KW-0378">Hydrolase</keyword>
<keyword id="KW-0547">Nucleotide-binding</keyword>
<keyword id="KW-1185">Reference proteome</keyword>
<keyword id="KW-0742">SOS response</keyword>
<evidence type="ECO:0000255" key="1">
    <source>
        <dbReference type="HAMAP-Rule" id="MF_00204"/>
    </source>
</evidence>
<evidence type="ECO:0000256" key="2">
    <source>
        <dbReference type="SAM" id="MobiDB-lite"/>
    </source>
</evidence>
<dbReference type="EMBL" id="CP000468">
    <property type="protein sequence ID" value="ABJ00161.1"/>
    <property type="molecule type" value="Genomic_DNA"/>
</dbReference>
<dbReference type="RefSeq" id="WP_000042533.1">
    <property type="nucleotide sequence ID" value="NZ_CADILS010000026.1"/>
</dbReference>
<dbReference type="BMRB" id="A1A921"/>
<dbReference type="SMR" id="A1A921"/>
<dbReference type="GeneID" id="93776651"/>
<dbReference type="KEGG" id="ecv:APECO1_1310"/>
<dbReference type="HOGENOM" id="CLU_009621_2_1_6"/>
<dbReference type="Proteomes" id="UP000008216">
    <property type="component" value="Chromosome"/>
</dbReference>
<dbReference type="GO" id="GO:0005737">
    <property type="term" value="C:cytoplasm"/>
    <property type="evidence" value="ECO:0007669"/>
    <property type="project" value="UniProtKB-SubCell"/>
</dbReference>
<dbReference type="GO" id="GO:0009380">
    <property type="term" value="C:excinuclease repair complex"/>
    <property type="evidence" value="ECO:0007669"/>
    <property type="project" value="InterPro"/>
</dbReference>
<dbReference type="GO" id="GO:0005524">
    <property type="term" value="F:ATP binding"/>
    <property type="evidence" value="ECO:0007669"/>
    <property type="project" value="UniProtKB-UniRule"/>
</dbReference>
<dbReference type="GO" id="GO:0016887">
    <property type="term" value="F:ATP hydrolysis activity"/>
    <property type="evidence" value="ECO:0007669"/>
    <property type="project" value="InterPro"/>
</dbReference>
<dbReference type="GO" id="GO:0003677">
    <property type="term" value="F:DNA binding"/>
    <property type="evidence" value="ECO:0007669"/>
    <property type="project" value="UniProtKB-UniRule"/>
</dbReference>
<dbReference type="GO" id="GO:0009381">
    <property type="term" value="F:excinuclease ABC activity"/>
    <property type="evidence" value="ECO:0007669"/>
    <property type="project" value="UniProtKB-UniRule"/>
</dbReference>
<dbReference type="GO" id="GO:0004386">
    <property type="term" value="F:helicase activity"/>
    <property type="evidence" value="ECO:0007669"/>
    <property type="project" value="UniProtKB-KW"/>
</dbReference>
<dbReference type="GO" id="GO:0006289">
    <property type="term" value="P:nucleotide-excision repair"/>
    <property type="evidence" value="ECO:0007669"/>
    <property type="project" value="UniProtKB-UniRule"/>
</dbReference>
<dbReference type="GO" id="GO:0009432">
    <property type="term" value="P:SOS response"/>
    <property type="evidence" value="ECO:0007669"/>
    <property type="project" value="UniProtKB-UniRule"/>
</dbReference>
<dbReference type="CDD" id="cd17916">
    <property type="entry name" value="DEXHc_UvrB"/>
    <property type="match status" value="1"/>
</dbReference>
<dbReference type="CDD" id="cd18790">
    <property type="entry name" value="SF2_C_UvrB"/>
    <property type="match status" value="1"/>
</dbReference>
<dbReference type="FunFam" id="3.40.50.300:FF:000257">
    <property type="entry name" value="UvrABC system protein B"/>
    <property type="match status" value="1"/>
</dbReference>
<dbReference type="FunFam" id="3.40.50.300:FF:000401">
    <property type="entry name" value="UvrABC system protein B"/>
    <property type="match status" value="1"/>
</dbReference>
<dbReference type="FunFam" id="3.40.50.300:FF:000477">
    <property type="entry name" value="UvrABC system protein B"/>
    <property type="match status" value="1"/>
</dbReference>
<dbReference type="Gene3D" id="3.40.50.300">
    <property type="entry name" value="P-loop containing nucleotide triphosphate hydrolases"/>
    <property type="match status" value="3"/>
</dbReference>
<dbReference type="Gene3D" id="4.10.860.10">
    <property type="entry name" value="UVR domain"/>
    <property type="match status" value="1"/>
</dbReference>
<dbReference type="HAMAP" id="MF_00204">
    <property type="entry name" value="UvrB"/>
    <property type="match status" value="1"/>
</dbReference>
<dbReference type="InterPro" id="IPR006935">
    <property type="entry name" value="Helicase/UvrB_N"/>
</dbReference>
<dbReference type="InterPro" id="IPR014001">
    <property type="entry name" value="Helicase_ATP-bd"/>
</dbReference>
<dbReference type="InterPro" id="IPR001650">
    <property type="entry name" value="Helicase_C-like"/>
</dbReference>
<dbReference type="InterPro" id="IPR027417">
    <property type="entry name" value="P-loop_NTPase"/>
</dbReference>
<dbReference type="InterPro" id="IPR001943">
    <property type="entry name" value="UVR_dom"/>
</dbReference>
<dbReference type="InterPro" id="IPR036876">
    <property type="entry name" value="UVR_dom_sf"/>
</dbReference>
<dbReference type="InterPro" id="IPR004807">
    <property type="entry name" value="UvrB"/>
</dbReference>
<dbReference type="InterPro" id="IPR041471">
    <property type="entry name" value="UvrB_inter"/>
</dbReference>
<dbReference type="InterPro" id="IPR024759">
    <property type="entry name" value="UvrB_YAD/RRR_dom"/>
</dbReference>
<dbReference type="NCBIfam" id="NF003673">
    <property type="entry name" value="PRK05298.1"/>
    <property type="match status" value="1"/>
</dbReference>
<dbReference type="NCBIfam" id="TIGR00631">
    <property type="entry name" value="uvrb"/>
    <property type="match status" value="1"/>
</dbReference>
<dbReference type="PANTHER" id="PTHR24029">
    <property type="entry name" value="UVRABC SYSTEM PROTEIN B"/>
    <property type="match status" value="1"/>
</dbReference>
<dbReference type="PANTHER" id="PTHR24029:SF0">
    <property type="entry name" value="UVRABC SYSTEM PROTEIN B"/>
    <property type="match status" value="1"/>
</dbReference>
<dbReference type="Pfam" id="PF00271">
    <property type="entry name" value="Helicase_C"/>
    <property type="match status" value="1"/>
</dbReference>
<dbReference type="Pfam" id="PF04851">
    <property type="entry name" value="ResIII"/>
    <property type="match status" value="1"/>
</dbReference>
<dbReference type="Pfam" id="PF02151">
    <property type="entry name" value="UVR"/>
    <property type="match status" value="1"/>
</dbReference>
<dbReference type="Pfam" id="PF12344">
    <property type="entry name" value="UvrB"/>
    <property type="match status" value="1"/>
</dbReference>
<dbReference type="Pfam" id="PF17757">
    <property type="entry name" value="UvrB_inter"/>
    <property type="match status" value="1"/>
</dbReference>
<dbReference type="SMART" id="SM00487">
    <property type="entry name" value="DEXDc"/>
    <property type="match status" value="1"/>
</dbReference>
<dbReference type="SMART" id="SM00490">
    <property type="entry name" value="HELICc"/>
    <property type="match status" value="1"/>
</dbReference>
<dbReference type="SUPFAM" id="SSF46600">
    <property type="entry name" value="C-terminal UvrC-binding domain of UvrB"/>
    <property type="match status" value="1"/>
</dbReference>
<dbReference type="SUPFAM" id="SSF52540">
    <property type="entry name" value="P-loop containing nucleoside triphosphate hydrolases"/>
    <property type="match status" value="2"/>
</dbReference>
<dbReference type="PROSITE" id="PS51192">
    <property type="entry name" value="HELICASE_ATP_BIND_1"/>
    <property type="match status" value="1"/>
</dbReference>
<dbReference type="PROSITE" id="PS51194">
    <property type="entry name" value="HELICASE_CTER"/>
    <property type="match status" value="1"/>
</dbReference>
<dbReference type="PROSITE" id="PS50151">
    <property type="entry name" value="UVR"/>
    <property type="match status" value="1"/>
</dbReference>
<reference key="1">
    <citation type="journal article" date="2007" name="J. Bacteriol.">
        <title>The genome sequence of avian pathogenic Escherichia coli strain O1:K1:H7 shares strong similarities with human extraintestinal pathogenic E. coli genomes.</title>
        <authorList>
            <person name="Johnson T.J."/>
            <person name="Kariyawasam S."/>
            <person name="Wannemuehler Y."/>
            <person name="Mangiamele P."/>
            <person name="Johnson S.J."/>
            <person name="Doetkott C."/>
            <person name="Skyberg J.A."/>
            <person name="Lynne A.M."/>
            <person name="Johnson J.R."/>
            <person name="Nolan L.K."/>
        </authorList>
    </citation>
    <scope>NUCLEOTIDE SEQUENCE [LARGE SCALE GENOMIC DNA]</scope>
</reference>
<feature type="chain" id="PRO_1000077888" description="UvrABC system protein B">
    <location>
        <begin position="1"/>
        <end position="673"/>
    </location>
</feature>
<feature type="domain" description="Helicase ATP-binding" evidence="1">
    <location>
        <begin position="26"/>
        <end position="183"/>
    </location>
</feature>
<feature type="domain" description="Helicase C-terminal" evidence="1">
    <location>
        <begin position="431"/>
        <end position="597"/>
    </location>
</feature>
<feature type="domain" description="UVR" evidence="1">
    <location>
        <begin position="633"/>
        <end position="668"/>
    </location>
</feature>
<feature type="region of interest" description="Disordered" evidence="2">
    <location>
        <begin position="608"/>
        <end position="627"/>
    </location>
</feature>
<feature type="short sequence motif" description="Beta-hairpin">
    <location>
        <begin position="92"/>
        <end position="115"/>
    </location>
</feature>
<feature type="binding site" evidence="1">
    <location>
        <begin position="39"/>
        <end position="46"/>
    </location>
    <ligand>
        <name>ATP</name>
        <dbReference type="ChEBI" id="CHEBI:30616"/>
    </ligand>
</feature>
<accession>A1A921</accession>
<sequence>MSKPFKLNSAFKPSGDQPEAIRRLEEGLEDGLAHQTLLGVTGSGKTFTIANVIADLQRPTMVLAPNKTLAAQLYGEMKEFFPENAVEYFVSYYDYYQPEAYVPSSDTFIEKDASVNEHIEQMRLSATKAMLERRDVVVVASVSAIYGLGDPDLYLKMMLHLTVGMIIDQRAILRRLAELQYARNDQAFQRGTFRVRGEVIDIFPAESDDIALRVELFDEEVERLSLFDPLTGQIVSTIPRFTIYPKTHYVTPRERIVQAMEEIKEELAARRKVLLENNKLLEEQRLTQRTQFDLEMMNELGYCSGIENYSRFLSGRGPGEPPPTLFDYLPADGLLVVDESHVTIPQIGGMYRGDRARKETLVEYGFRLPSALDNRPLKFEEFEALAPQTIYVSATPGNYELEKSGGDVVDQVVRPTGLLDPIIEVRPVATQVDDLLSEIRQRAAINERVLVTTLTKRMAEDLTEYLEEHGERVRYLHSDIDTVERMEIIRDLRLGEFDVLVGINLLREGLDMPEVSLVAILDADKEGFLRSERSLIQTIGRAARNVNGKAILYGDKITPSMAKAIGETERRREKQQKYNEEHGITPQGLNKKVVDILALGQNIAKTKAKGRGKSRPIVEPDNVPMDMSPKALQQKIHELEGLMMQHAQNLEFEEAAQIRDQLHQLRELFIAAS</sequence>
<gene>
    <name evidence="1" type="primary">uvrB</name>
    <name type="ordered locus">Ecok1_06670</name>
    <name type="ORF">APECO1_1310</name>
</gene>
<name>UVRB_ECOK1</name>
<proteinExistence type="inferred from homology"/>
<organism>
    <name type="scientific">Escherichia coli O1:K1 / APEC</name>
    <dbReference type="NCBI Taxonomy" id="405955"/>
    <lineage>
        <taxon>Bacteria</taxon>
        <taxon>Pseudomonadati</taxon>
        <taxon>Pseudomonadota</taxon>
        <taxon>Gammaproteobacteria</taxon>
        <taxon>Enterobacterales</taxon>
        <taxon>Enterobacteriaceae</taxon>
        <taxon>Escherichia</taxon>
    </lineage>
</organism>